<protein>
    <recommendedName>
        <fullName evidence="1">ATP-dependent dethiobiotin synthetase BioD 2</fullName>
        <ecNumber evidence="1">6.3.3.3</ecNumber>
    </recommendedName>
    <alternativeName>
        <fullName evidence="1">DTB synthetase 2</fullName>
        <shortName evidence="1">DTBS 2</shortName>
    </alternativeName>
    <alternativeName>
        <fullName evidence="1">Dethiobiotin synthase 2</fullName>
    </alternativeName>
</protein>
<sequence>MAKVFFITGIDTDIGKTIATGWYAKKLMQQGASVITQKMIQTGCRGIAEDLLTHRKIQGIELTEEDKQGITCPYVFDYPCSPHLAAKLEQRTIERKKIETCTALLCEKYDYVLLEGAGGLCVPYNEEETTLDYLCQHQYPVILVTSGKLGSINHTLLSLQVLNSKRVSVHAVIYNLYPETDQVISQETQHFLRRYLEKYSPNTLFEVMDLISV</sequence>
<gene>
    <name evidence="1" type="primary">bioD2</name>
    <name type="ordered locus">PM1904</name>
</gene>
<proteinExistence type="inferred from homology"/>
<accession>Q9CJT7</accession>
<reference key="1">
    <citation type="journal article" date="2001" name="Proc. Natl. Acad. Sci. U.S.A.">
        <title>Complete genomic sequence of Pasteurella multocida Pm70.</title>
        <authorList>
            <person name="May B.J."/>
            <person name="Zhang Q."/>
            <person name="Li L.L."/>
            <person name="Paustian M.L."/>
            <person name="Whittam T.S."/>
            <person name="Kapur V."/>
        </authorList>
    </citation>
    <scope>NUCLEOTIDE SEQUENCE [LARGE SCALE GENOMIC DNA]</scope>
    <source>
        <strain>Pm70</strain>
    </source>
</reference>
<evidence type="ECO:0000255" key="1">
    <source>
        <dbReference type="HAMAP-Rule" id="MF_00336"/>
    </source>
</evidence>
<dbReference type="EC" id="6.3.3.3" evidence="1"/>
<dbReference type="EMBL" id="AE004439">
    <property type="protein sequence ID" value="AAK03988.1"/>
    <property type="molecule type" value="Genomic_DNA"/>
</dbReference>
<dbReference type="SMR" id="Q9CJT7"/>
<dbReference type="STRING" id="272843.PM1904"/>
<dbReference type="EnsemblBacteria" id="AAK03988">
    <property type="protein sequence ID" value="AAK03988"/>
    <property type="gene ID" value="PM1904"/>
</dbReference>
<dbReference type="KEGG" id="pmu:PM1904"/>
<dbReference type="PATRIC" id="fig|272843.6.peg.1926"/>
<dbReference type="HOGENOM" id="CLU_072551_3_0_6"/>
<dbReference type="OrthoDB" id="9802097at2"/>
<dbReference type="UniPathway" id="UPA00078">
    <property type="reaction ID" value="UER00161"/>
</dbReference>
<dbReference type="Proteomes" id="UP000000809">
    <property type="component" value="Chromosome"/>
</dbReference>
<dbReference type="GO" id="GO:0005829">
    <property type="term" value="C:cytosol"/>
    <property type="evidence" value="ECO:0007669"/>
    <property type="project" value="TreeGrafter"/>
</dbReference>
<dbReference type="GO" id="GO:0005524">
    <property type="term" value="F:ATP binding"/>
    <property type="evidence" value="ECO:0007669"/>
    <property type="project" value="UniProtKB-UniRule"/>
</dbReference>
<dbReference type="GO" id="GO:0004141">
    <property type="term" value="F:dethiobiotin synthase activity"/>
    <property type="evidence" value="ECO:0007669"/>
    <property type="project" value="UniProtKB-UniRule"/>
</dbReference>
<dbReference type="GO" id="GO:0000287">
    <property type="term" value="F:magnesium ion binding"/>
    <property type="evidence" value="ECO:0007669"/>
    <property type="project" value="UniProtKB-UniRule"/>
</dbReference>
<dbReference type="GO" id="GO:0009102">
    <property type="term" value="P:biotin biosynthetic process"/>
    <property type="evidence" value="ECO:0007669"/>
    <property type="project" value="UniProtKB-UniRule"/>
</dbReference>
<dbReference type="CDD" id="cd03109">
    <property type="entry name" value="DTBS"/>
    <property type="match status" value="1"/>
</dbReference>
<dbReference type="FunFam" id="3.40.50.300:FF:000292">
    <property type="entry name" value="ATP-dependent dethiobiotin synthetase BioD"/>
    <property type="match status" value="1"/>
</dbReference>
<dbReference type="Gene3D" id="3.40.50.300">
    <property type="entry name" value="P-loop containing nucleotide triphosphate hydrolases"/>
    <property type="match status" value="1"/>
</dbReference>
<dbReference type="HAMAP" id="MF_00336">
    <property type="entry name" value="BioD"/>
    <property type="match status" value="1"/>
</dbReference>
<dbReference type="InterPro" id="IPR004472">
    <property type="entry name" value="DTB_synth_BioD"/>
</dbReference>
<dbReference type="InterPro" id="IPR027417">
    <property type="entry name" value="P-loop_NTPase"/>
</dbReference>
<dbReference type="NCBIfam" id="TIGR00347">
    <property type="entry name" value="bioD"/>
    <property type="match status" value="1"/>
</dbReference>
<dbReference type="PANTHER" id="PTHR43210:SF2">
    <property type="entry name" value="ATP-DEPENDENT DETHIOBIOTIN SYNTHETASE BIOD 2"/>
    <property type="match status" value="1"/>
</dbReference>
<dbReference type="PANTHER" id="PTHR43210">
    <property type="entry name" value="DETHIOBIOTIN SYNTHETASE"/>
    <property type="match status" value="1"/>
</dbReference>
<dbReference type="Pfam" id="PF13500">
    <property type="entry name" value="AAA_26"/>
    <property type="match status" value="1"/>
</dbReference>
<dbReference type="PIRSF" id="PIRSF006755">
    <property type="entry name" value="DTB_synth"/>
    <property type="match status" value="1"/>
</dbReference>
<dbReference type="SUPFAM" id="SSF52540">
    <property type="entry name" value="P-loop containing nucleoside triphosphate hydrolases"/>
    <property type="match status" value="1"/>
</dbReference>
<comment type="function">
    <text evidence="1">Catalyzes a mechanistically unusual reaction, the ATP-dependent insertion of CO2 between the N7 and N8 nitrogen atoms of 7,8-diaminopelargonic acid (DAPA, also called 7,8-diammoniononanoate) to form a ureido ring.</text>
</comment>
<comment type="catalytic activity">
    <reaction evidence="1">
        <text>(7R,8S)-7,8-diammoniononanoate + CO2 + ATP = (4R,5S)-dethiobiotin + ADP + phosphate + 3 H(+)</text>
        <dbReference type="Rhea" id="RHEA:15805"/>
        <dbReference type="ChEBI" id="CHEBI:15378"/>
        <dbReference type="ChEBI" id="CHEBI:16526"/>
        <dbReference type="ChEBI" id="CHEBI:30616"/>
        <dbReference type="ChEBI" id="CHEBI:43474"/>
        <dbReference type="ChEBI" id="CHEBI:149469"/>
        <dbReference type="ChEBI" id="CHEBI:149473"/>
        <dbReference type="ChEBI" id="CHEBI:456216"/>
        <dbReference type="EC" id="6.3.3.3"/>
    </reaction>
</comment>
<comment type="cofactor">
    <cofactor evidence="1">
        <name>Mg(2+)</name>
        <dbReference type="ChEBI" id="CHEBI:18420"/>
    </cofactor>
</comment>
<comment type="pathway">
    <text evidence="1">Cofactor biosynthesis; biotin biosynthesis; biotin from 7,8-diaminononanoate: step 1/2.</text>
</comment>
<comment type="subunit">
    <text evidence="1">Homodimer.</text>
</comment>
<comment type="subcellular location">
    <subcellularLocation>
        <location evidence="1">Cytoplasm</location>
    </subcellularLocation>
</comment>
<comment type="similarity">
    <text evidence="1">Belongs to the dethiobiotin synthetase family.</text>
</comment>
<name>BIOD2_PASMU</name>
<keyword id="KW-0067">ATP-binding</keyword>
<keyword id="KW-0093">Biotin biosynthesis</keyword>
<keyword id="KW-0963">Cytoplasm</keyword>
<keyword id="KW-0436">Ligase</keyword>
<keyword id="KW-0460">Magnesium</keyword>
<keyword id="KW-0479">Metal-binding</keyword>
<keyword id="KW-0547">Nucleotide-binding</keyword>
<keyword id="KW-1185">Reference proteome</keyword>
<organism>
    <name type="scientific">Pasteurella multocida (strain Pm70)</name>
    <dbReference type="NCBI Taxonomy" id="272843"/>
    <lineage>
        <taxon>Bacteria</taxon>
        <taxon>Pseudomonadati</taxon>
        <taxon>Pseudomonadota</taxon>
        <taxon>Gammaproteobacteria</taxon>
        <taxon>Pasteurellales</taxon>
        <taxon>Pasteurellaceae</taxon>
        <taxon>Pasteurella</taxon>
    </lineage>
</organism>
<feature type="chain" id="PRO_0000187981" description="ATP-dependent dethiobiotin synthetase BioD 2">
    <location>
        <begin position="1"/>
        <end position="213"/>
    </location>
</feature>
<feature type="active site" evidence="1">
    <location>
        <position position="38"/>
    </location>
</feature>
<feature type="binding site" evidence="1">
    <location>
        <begin position="13"/>
        <end position="18"/>
    </location>
    <ligand>
        <name>ATP</name>
        <dbReference type="ChEBI" id="CHEBI:30616"/>
    </ligand>
</feature>
<feature type="binding site" evidence="1">
    <location>
        <position position="17"/>
    </location>
    <ligand>
        <name>Mg(2+)</name>
        <dbReference type="ChEBI" id="CHEBI:18420"/>
    </ligand>
</feature>
<feature type="binding site" evidence="1">
    <location>
        <position position="42"/>
    </location>
    <ligand>
        <name>substrate</name>
    </ligand>
</feature>
<feature type="binding site" evidence="1">
    <location>
        <position position="50"/>
    </location>
    <ligand>
        <name>ATP</name>
        <dbReference type="ChEBI" id="CHEBI:30616"/>
    </ligand>
</feature>
<feature type="binding site" evidence="1">
    <location>
        <position position="50"/>
    </location>
    <ligand>
        <name>Mg(2+)</name>
        <dbReference type="ChEBI" id="CHEBI:18420"/>
    </ligand>
</feature>
<feature type="binding site" evidence="1">
    <location>
        <begin position="115"/>
        <end position="118"/>
    </location>
    <ligand>
        <name>ATP</name>
        <dbReference type="ChEBI" id="CHEBI:30616"/>
    </ligand>
</feature>
<feature type="binding site" evidence="1">
    <location>
        <position position="115"/>
    </location>
    <ligand>
        <name>Mg(2+)</name>
        <dbReference type="ChEBI" id="CHEBI:18420"/>
    </ligand>
</feature>